<dbReference type="PIR" id="S10548">
    <property type="entry name" value="S10548"/>
</dbReference>
<dbReference type="SMR" id="P17346"/>
<dbReference type="iPTMnet" id="P17346"/>
<dbReference type="GO" id="GO:0030246">
    <property type="term" value="F:carbohydrate binding"/>
    <property type="evidence" value="ECO:0007669"/>
    <property type="project" value="UniProtKB-KW"/>
</dbReference>
<dbReference type="CDD" id="cd00037">
    <property type="entry name" value="CLECT"/>
    <property type="match status" value="1"/>
</dbReference>
<dbReference type="Gene3D" id="3.10.100.10">
    <property type="entry name" value="Mannose-Binding Protein A, subunit A"/>
    <property type="match status" value="1"/>
</dbReference>
<dbReference type="InterPro" id="IPR001304">
    <property type="entry name" value="C-type_lectin-like"/>
</dbReference>
<dbReference type="InterPro" id="IPR016186">
    <property type="entry name" value="C-type_lectin-like/link_sf"/>
</dbReference>
<dbReference type="InterPro" id="IPR018378">
    <property type="entry name" value="C-type_lectin_CS"/>
</dbReference>
<dbReference type="InterPro" id="IPR052309">
    <property type="entry name" value="C-type_Lectin_Domain_Fam1"/>
</dbReference>
<dbReference type="InterPro" id="IPR016187">
    <property type="entry name" value="CTDL_fold"/>
</dbReference>
<dbReference type="PANTHER" id="PTHR46490:SF6">
    <property type="entry name" value="ASIALOGLYCOPROTEIN RECEPTOR 1-LIKE-RELATED"/>
    <property type="match status" value="1"/>
</dbReference>
<dbReference type="PANTHER" id="PTHR46490">
    <property type="entry name" value="C-TYPE LECTIN DOMAIN FAMILY 12 MEMBER A-RELATED"/>
    <property type="match status" value="1"/>
</dbReference>
<dbReference type="Pfam" id="PF00059">
    <property type="entry name" value="Lectin_C"/>
    <property type="match status" value="1"/>
</dbReference>
<dbReference type="SMART" id="SM00034">
    <property type="entry name" value="CLECT"/>
    <property type="match status" value="1"/>
</dbReference>
<dbReference type="SUPFAM" id="SSF56436">
    <property type="entry name" value="C-type lectin-like"/>
    <property type="match status" value="1"/>
</dbReference>
<dbReference type="PROSITE" id="PS00615">
    <property type="entry name" value="C_TYPE_LECTIN_1"/>
    <property type="match status" value="1"/>
</dbReference>
<dbReference type="PROSITE" id="PS50041">
    <property type="entry name" value="C_TYPE_LECTIN_2"/>
    <property type="match status" value="1"/>
</dbReference>
<accession>P17346</accession>
<organism>
    <name type="scientific">Megabalanus rosa</name>
    <name type="common">Acorn barnacle</name>
    <dbReference type="NCBI Taxonomy" id="6680"/>
    <lineage>
        <taxon>Eukaryota</taxon>
        <taxon>Metazoa</taxon>
        <taxon>Ecdysozoa</taxon>
        <taxon>Arthropoda</taxon>
        <taxon>Crustacea</taxon>
        <taxon>Multicrustacea</taxon>
        <taxon>Cirripedia</taxon>
        <taxon>Thoracica</taxon>
        <taxon>Thoracicalcarea</taxon>
        <taxon>Balanomorpha</taxon>
        <taxon>Balanoidea</taxon>
        <taxon>Balanidae</taxon>
        <taxon>Megabalaninae</taxon>
        <taxon>Megabalanus</taxon>
    </lineage>
</organism>
<comment type="function">
    <text>Sugar-binding protein which recognizes specific carbohydrate structures and agglutinates a variety of animal cells by binding to cell-surface glycoproteins and glycolipids. Calcium-dependent lectin. Invertebrate lectins may be involved in defense functions.</text>
</comment>
<comment type="subunit">
    <text evidence="2">Homohexamer; disulfide-linked.</text>
</comment>
<comment type="tissue specificity">
    <text>Coelemic fluid.</text>
</comment>
<comment type="miscellaneous">
    <text>This lectin binds galactose.</text>
</comment>
<proteinExistence type="evidence at protein level"/>
<reference key="1">
    <citation type="journal article" date="1990" name="Biochim. Biophys. Acta">
        <title>The amino-acid sequence of multiple lectins of the acorn barnacle Megabalanus rosa and its homology with animal lectins.</title>
        <authorList>
            <person name="Muramoto K."/>
            <person name="Kamiya H."/>
        </authorList>
    </citation>
    <scope>PROTEIN SEQUENCE</scope>
    <source>
        <tissue>Coelomic fluid</tissue>
    </source>
</reference>
<reference key="2">
    <citation type="journal article" date="1990" name="Biochim. Biophys. Acta">
        <title>The positions of the disulfide bonds and the glycosylation site in a lectin of the acorn barnacle Megabalanus rosa.</title>
        <authorList>
            <person name="Muramoto K."/>
            <person name="Kamiya H."/>
        </authorList>
    </citation>
    <scope>DISULFIDE BONDS</scope>
    <scope>GLYCOSYLATION AT ASN-39</scope>
</reference>
<sequence length="173" mass="19581">YGVPEEPPPVPDTCGHVAEERVTQAFAELTTKLSELQENVTNTFHGCNHCPNGWVTSENKCFHVPLEKASWMVAHGVCARLDSRARLASIDAADQAVVEPLSSEKMWIGLSYDSANDAAVWADDSHSSHRNWYATQPDDESELCVLIKEDQYRQWHDYNCNDRYNFVCEIVLH</sequence>
<keyword id="KW-0106">Calcium</keyword>
<keyword id="KW-0903">Direct protein sequencing</keyword>
<keyword id="KW-1015">Disulfide bond</keyword>
<keyword id="KW-0325">Glycoprotein</keyword>
<keyword id="KW-0430">Lectin</keyword>
<name>LEC2_MEGRO</name>
<protein>
    <recommendedName>
        <fullName>Lectin BRA-2</fullName>
    </recommendedName>
</protein>
<evidence type="ECO:0000255" key="1">
    <source>
        <dbReference type="PROSITE-ProRule" id="PRU00040"/>
    </source>
</evidence>
<evidence type="ECO:0000269" key="2">
    <source>
    </source>
</evidence>
<feature type="chain" id="PRO_0000046647" description="Lectin BRA-2">
    <location>
        <begin position="1"/>
        <end position="173"/>
    </location>
</feature>
<feature type="domain" description="C-type lectin" evidence="1">
    <location>
        <begin position="51"/>
        <end position="170"/>
    </location>
</feature>
<feature type="glycosylation site" description="N-linked (GlcNAc...) asparagine" evidence="2">
    <location>
        <position position="39"/>
    </location>
</feature>
<feature type="disulfide bond" description="Interchain (with C-50)" evidence="1 2">
    <location>
        <position position="14"/>
    </location>
</feature>
<feature type="disulfide bond" evidence="1 2">
    <location>
        <begin position="47"/>
        <end position="61"/>
    </location>
</feature>
<feature type="disulfide bond" description="Interchain (with C-14)" evidence="1 2">
    <location>
        <position position="50"/>
    </location>
</feature>
<feature type="disulfide bond" evidence="1 2">
    <location>
        <begin position="78"/>
        <end position="168"/>
    </location>
</feature>
<feature type="disulfide bond" evidence="1 2">
    <location>
        <begin position="144"/>
        <end position="160"/>
    </location>
</feature>